<feature type="chain" id="PRO_0000248666" description="Proline--tRNA ligase">
    <location>
        <begin position="1"/>
        <end position="581"/>
    </location>
</feature>
<reference key="1">
    <citation type="journal article" date="2005" name="Infect. Immun.">
        <title>Comparative genomic analysis of Chlamydia trachomatis oculotropic and genitotropic strains.</title>
        <authorList>
            <person name="Carlson J.H."/>
            <person name="Porcella S.F."/>
            <person name="McClarty G."/>
            <person name="Caldwell H.D."/>
        </authorList>
    </citation>
    <scope>NUCLEOTIDE SEQUENCE [LARGE SCALE GENOMIC DNA]</scope>
    <source>
        <strain>ATCC VR-571B / DSM 19440 / HAR-13</strain>
    </source>
</reference>
<keyword id="KW-0030">Aminoacyl-tRNA synthetase</keyword>
<keyword id="KW-0067">ATP-binding</keyword>
<keyword id="KW-0963">Cytoplasm</keyword>
<keyword id="KW-0436">Ligase</keyword>
<keyword id="KW-0547">Nucleotide-binding</keyword>
<keyword id="KW-0648">Protein biosynthesis</keyword>
<accession>Q3KLW0</accession>
<evidence type="ECO:0000255" key="1">
    <source>
        <dbReference type="HAMAP-Rule" id="MF_01569"/>
    </source>
</evidence>
<comment type="function">
    <text evidence="1">Catalyzes the attachment of proline to tRNA(Pro) in a two-step reaction: proline is first activated by ATP to form Pro-AMP and then transferred to the acceptor end of tRNA(Pro). As ProRS can inadvertently accommodate and process non-cognate amino acids such as alanine and cysteine, to avoid such errors it has two additional distinct editing activities against alanine. One activity is designated as 'pretransfer' editing and involves the tRNA(Pro)-independent hydrolysis of activated Ala-AMP. The other activity is designated 'posttransfer' editing and involves deacylation of mischarged Ala-tRNA(Pro). The misacylated Cys-tRNA(Pro) is not edited by ProRS.</text>
</comment>
<comment type="catalytic activity">
    <reaction evidence="1">
        <text>tRNA(Pro) + L-proline + ATP = L-prolyl-tRNA(Pro) + AMP + diphosphate</text>
        <dbReference type="Rhea" id="RHEA:14305"/>
        <dbReference type="Rhea" id="RHEA-COMP:9700"/>
        <dbReference type="Rhea" id="RHEA-COMP:9702"/>
        <dbReference type="ChEBI" id="CHEBI:30616"/>
        <dbReference type="ChEBI" id="CHEBI:33019"/>
        <dbReference type="ChEBI" id="CHEBI:60039"/>
        <dbReference type="ChEBI" id="CHEBI:78442"/>
        <dbReference type="ChEBI" id="CHEBI:78532"/>
        <dbReference type="ChEBI" id="CHEBI:456215"/>
        <dbReference type="EC" id="6.1.1.15"/>
    </reaction>
</comment>
<comment type="subunit">
    <text evidence="1">Homodimer.</text>
</comment>
<comment type="subcellular location">
    <subcellularLocation>
        <location evidence="1">Cytoplasm</location>
    </subcellularLocation>
</comment>
<comment type="domain">
    <text evidence="1">Consists of three domains: the N-terminal catalytic domain, the editing domain and the C-terminal anticodon-binding domain.</text>
</comment>
<comment type="similarity">
    <text evidence="1">Belongs to the class-II aminoacyl-tRNA synthetase family. ProS type 1 subfamily.</text>
</comment>
<proteinExistence type="inferred from homology"/>
<name>SYP_CHLTA</name>
<dbReference type="EC" id="6.1.1.15" evidence="1"/>
<dbReference type="EMBL" id="CP000051">
    <property type="protein sequence ID" value="AAX50662.1"/>
    <property type="molecule type" value="Genomic_DNA"/>
</dbReference>
<dbReference type="RefSeq" id="WP_011324719.1">
    <property type="nucleotide sequence ID" value="NC_007429.1"/>
</dbReference>
<dbReference type="SMR" id="Q3KLW0"/>
<dbReference type="KEGG" id="cta:CTA_0428"/>
<dbReference type="HOGENOM" id="CLU_016739_0_0_0"/>
<dbReference type="Proteomes" id="UP000002532">
    <property type="component" value="Chromosome"/>
</dbReference>
<dbReference type="GO" id="GO:0005829">
    <property type="term" value="C:cytosol"/>
    <property type="evidence" value="ECO:0007669"/>
    <property type="project" value="TreeGrafter"/>
</dbReference>
<dbReference type="GO" id="GO:0002161">
    <property type="term" value="F:aminoacyl-tRNA deacylase activity"/>
    <property type="evidence" value="ECO:0007669"/>
    <property type="project" value="InterPro"/>
</dbReference>
<dbReference type="GO" id="GO:0005524">
    <property type="term" value="F:ATP binding"/>
    <property type="evidence" value="ECO:0007669"/>
    <property type="project" value="UniProtKB-UniRule"/>
</dbReference>
<dbReference type="GO" id="GO:0004827">
    <property type="term" value="F:proline-tRNA ligase activity"/>
    <property type="evidence" value="ECO:0007669"/>
    <property type="project" value="UniProtKB-UniRule"/>
</dbReference>
<dbReference type="GO" id="GO:0006433">
    <property type="term" value="P:prolyl-tRNA aminoacylation"/>
    <property type="evidence" value="ECO:0007669"/>
    <property type="project" value="UniProtKB-UniRule"/>
</dbReference>
<dbReference type="CDD" id="cd04334">
    <property type="entry name" value="ProRS-INS"/>
    <property type="match status" value="1"/>
</dbReference>
<dbReference type="CDD" id="cd00861">
    <property type="entry name" value="ProRS_anticodon_short"/>
    <property type="match status" value="1"/>
</dbReference>
<dbReference type="CDD" id="cd00779">
    <property type="entry name" value="ProRS_core_prok"/>
    <property type="match status" value="1"/>
</dbReference>
<dbReference type="FunFam" id="3.90.960.10:FF:000011">
    <property type="entry name" value="Proline--tRNA ligase"/>
    <property type="match status" value="1"/>
</dbReference>
<dbReference type="Gene3D" id="3.40.50.800">
    <property type="entry name" value="Anticodon-binding domain"/>
    <property type="match status" value="1"/>
</dbReference>
<dbReference type="Gene3D" id="3.30.930.10">
    <property type="entry name" value="Bira Bifunctional Protein, Domain 2"/>
    <property type="match status" value="1"/>
</dbReference>
<dbReference type="Gene3D" id="3.90.960.10">
    <property type="entry name" value="YbaK/aminoacyl-tRNA synthetase-associated domain"/>
    <property type="match status" value="1"/>
</dbReference>
<dbReference type="HAMAP" id="MF_01569">
    <property type="entry name" value="Pro_tRNA_synth_type1"/>
    <property type="match status" value="1"/>
</dbReference>
<dbReference type="InterPro" id="IPR002314">
    <property type="entry name" value="aa-tRNA-synt_IIb"/>
</dbReference>
<dbReference type="InterPro" id="IPR006195">
    <property type="entry name" value="aa-tRNA-synth_II"/>
</dbReference>
<dbReference type="InterPro" id="IPR045864">
    <property type="entry name" value="aa-tRNA-synth_II/BPL/LPL"/>
</dbReference>
<dbReference type="InterPro" id="IPR004154">
    <property type="entry name" value="Anticodon-bd"/>
</dbReference>
<dbReference type="InterPro" id="IPR036621">
    <property type="entry name" value="Anticodon-bd_dom_sf"/>
</dbReference>
<dbReference type="InterPro" id="IPR002316">
    <property type="entry name" value="Pro-tRNA-ligase_IIa"/>
</dbReference>
<dbReference type="InterPro" id="IPR004500">
    <property type="entry name" value="Pro-tRNA-synth_IIa_bac-type"/>
</dbReference>
<dbReference type="InterPro" id="IPR023717">
    <property type="entry name" value="Pro-tRNA-Synthase_IIa_type1"/>
</dbReference>
<dbReference type="InterPro" id="IPR050062">
    <property type="entry name" value="Pro-tRNA_synthetase"/>
</dbReference>
<dbReference type="InterPro" id="IPR044140">
    <property type="entry name" value="ProRS_anticodon_short"/>
</dbReference>
<dbReference type="InterPro" id="IPR033730">
    <property type="entry name" value="ProRS_core_prok"/>
</dbReference>
<dbReference type="InterPro" id="IPR036754">
    <property type="entry name" value="YbaK/aa-tRNA-synt-asso_dom_sf"/>
</dbReference>
<dbReference type="InterPro" id="IPR007214">
    <property type="entry name" value="YbaK/aa-tRNA-synth-assoc-dom"/>
</dbReference>
<dbReference type="NCBIfam" id="NF006625">
    <property type="entry name" value="PRK09194.1"/>
    <property type="match status" value="1"/>
</dbReference>
<dbReference type="NCBIfam" id="TIGR00409">
    <property type="entry name" value="proS_fam_II"/>
    <property type="match status" value="1"/>
</dbReference>
<dbReference type="PANTHER" id="PTHR42753">
    <property type="entry name" value="MITOCHONDRIAL RIBOSOME PROTEIN L39/PROLYL-TRNA LIGASE FAMILY MEMBER"/>
    <property type="match status" value="1"/>
</dbReference>
<dbReference type="PANTHER" id="PTHR42753:SF2">
    <property type="entry name" value="PROLINE--TRNA LIGASE"/>
    <property type="match status" value="1"/>
</dbReference>
<dbReference type="Pfam" id="PF03129">
    <property type="entry name" value="HGTP_anticodon"/>
    <property type="match status" value="1"/>
</dbReference>
<dbReference type="Pfam" id="PF00587">
    <property type="entry name" value="tRNA-synt_2b"/>
    <property type="match status" value="1"/>
</dbReference>
<dbReference type="Pfam" id="PF04073">
    <property type="entry name" value="tRNA_edit"/>
    <property type="match status" value="1"/>
</dbReference>
<dbReference type="PRINTS" id="PR01046">
    <property type="entry name" value="TRNASYNTHPRO"/>
</dbReference>
<dbReference type="SUPFAM" id="SSF52954">
    <property type="entry name" value="Class II aaRS ABD-related"/>
    <property type="match status" value="1"/>
</dbReference>
<dbReference type="SUPFAM" id="SSF55681">
    <property type="entry name" value="Class II aaRS and biotin synthetases"/>
    <property type="match status" value="1"/>
</dbReference>
<dbReference type="SUPFAM" id="SSF55826">
    <property type="entry name" value="YbaK/ProRS associated domain"/>
    <property type="match status" value="1"/>
</dbReference>
<dbReference type="PROSITE" id="PS50862">
    <property type="entry name" value="AA_TRNA_LIGASE_II"/>
    <property type="match status" value="1"/>
</dbReference>
<sequence length="581" mass="65710">MRTSLLFYRTSKNANKEASVLSYELLQKAGYLFKTSKGIYSYTPLFQRVILKMTEIIREELNAIGGQEVCLPLLQPAELWEKTGRWKAFLSEKLLYVLKDRENKAMCLAPTHEEVVSEFVAQWLTGREQLPIHLYQIGTKFRDEIRPRFGLMRAKEFLMEDSYTFSDSPEQMEEQYAKLRLAYQRIFDRLNLKYVIVAADGGKIGKGKSEEFHVLCSLGEDTICVSGSYGANVEAAQAIPPSYVYDSNLLPVEEVATPNIRTIEDLEVFFNTPKHKILKTLVVKTRQKDSEKFFAICIRGDRQINLTKVASFLQVDDCELASEEEILKHLHVEKGFIGPLYCPIPCYADETTRPMTNFICANNQKDVHCKHMNWGRDIPLPAFGDFLLAEAGDLCPQNGGAPYEIFQGVEVAHIFNLGTRYTESFSVGFQDKNGDKQLCWMGTYGIGVGRTLAACIEQLADNKGLVWPLAVTPFSITILYNGGDTEGEATALQLYQSLNTEGFEPLLDDRNERLGFKLKDSDLLGIPYKLIIGKSFQSTGLLEIESRSGEKCNVSPENLLDWCSKNLPCHTRKIPPLQEQN</sequence>
<protein>
    <recommendedName>
        <fullName evidence="1">Proline--tRNA ligase</fullName>
        <ecNumber evidence="1">6.1.1.15</ecNumber>
    </recommendedName>
    <alternativeName>
        <fullName evidence="1">Prolyl-tRNA synthetase</fullName>
        <shortName evidence="1">ProRS</shortName>
    </alternativeName>
</protein>
<gene>
    <name evidence="1" type="primary">proS</name>
    <name type="ordered locus">CTA_0428</name>
</gene>
<organism>
    <name type="scientific">Chlamydia trachomatis serovar A (strain ATCC VR-571B / DSM 19440 / HAR-13)</name>
    <dbReference type="NCBI Taxonomy" id="315277"/>
    <lineage>
        <taxon>Bacteria</taxon>
        <taxon>Pseudomonadati</taxon>
        <taxon>Chlamydiota</taxon>
        <taxon>Chlamydiia</taxon>
        <taxon>Chlamydiales</taxon>
        <taxon>Chlamydiaceae</taxon>
        <taxon>Chlamydia/Chlamydophila group</taxon>
        <taxon>Chlamydia</taxon>
    </lineage>
</organism>